<reference key="1">
    <citation type="journal article" date="2004" name="Proc. Natl. Acad. Sci. U.S.A.">
        <title>Comparison of the genome of the oral pathogen Treponema denticola with other spirochete genomes.</title>
        <authorList>
            <person name="Seshadri R."/>
            <person name="Myers G.S.A."/>
            <person name="Tettelin H."/>
            <person name="Eisen J.A."/>
            <person name="Heidelberg J.F."/>
            <person name="Dodson R.J."/>
            <person name="Davidsen T.M."/>
            <person name="DeBoy R.T."/>
            <person name="Fouts D.E."/>
            <person name="Haft D.H."/>
            <person name="Selengut J."/>
            <person name="Ren Q."/>
            <person name="Brinkac L.M."/>
            <person name="Madupu R."/>
            <person name="Kolonay J.F."/>
            <person name="Durkin S.A."/>
            <person name="Daugherty S.C."/>
            <person name="Shetty J."/>
            <person name="Shvartsbeyn A."/>
            <person name="Gebregeorgis E."/>
            <person name="Geer K."/>
            <person name="Tsegaye G."/>
            <person name="Malek J.A."/>
            <person name="Ayodeji B."/>
            <person name="Shatsman S."/>
            <person name="McLeod M.P."/>
            <person name="Smajs D."/>
            <person name="Howell J.K."/>
            <person name="Pal S."/>
            <person name="Amin A."/>
            <person name="Vashisth P."/>
            <person name="McNeill T.Z."/>
            <person name="Xiang Q."/>
            <person name="Sodergren E."/>
            <person name="Baca E."/>
            <person name="Weinstock G.M."/>
            <person name="Norris S.J."/>
            <person name="Fraser C.M."/>
            <person name="Paulsen I.T."/>
        </authorList>
    </citation>
    <scope>NUCLEOTIDE SEQUENCE [LARGE SCALE GENOMIC DNA]</scope>
    <source>
        <strain>ATCC 35405 / DSM 14222 / CIP 103919 / JCM 8153 / KCTC 15104</strain>
    </source>
</reference>
<sequence>MSEFRLARLGEQIREEISALICSGKIKDPRVSSLLSINRVIVSGDLAYAKVYVSSFLDEHKTKQGVRGLENASGFIRTSLAKKLHVRQCPELTFIFDKSIKEGIDMVNKLESLEYFTDPDEDEGTAGSSEAD</sequence>
<feature type="chain" id="PRO_0000102760" description="Ribosome-binding factor A">
    <location>
        <begin position="1"/>
        <end position="132"/>
    </location>
</feature>
<proteinExistence type="inferred from homology"/>
<gene>
    <name evidence="1" type="primary">rbfA</name>
    <name type="ordered locus">TDE_1105</name>
</gene>
<name>RBFA_TREDE</name>
<keyword id="KW-0963">Cytoplasm</keyword>
<keyword id="KW-1185">Reference proteome</keyword>
<keyword id="KW-0690">Ribosome biogenesis</keyword>
<accession>Q73NP7</accession>
<comment type="function">
    <text evidence="1">One of several proteins that assist in the late maturation steps of the functional core of the 30S ribosomal subunit. Associates with free 30S ribosomal subunits (but not with 30S subunits that are part of 70S ribosomes or polysomes). Required for efficient processing of 16S rRNA. May interact with the 5'-terminal helix region of 16S rRNA.</text>
</comment>
<comment type="subunit">
    <text evidence="1">Monomer. Binds 30S ribosomal subunits, but not 50S ribosomal subunits or 70S ribosomes.</text>
</comment>
<comment type="subcellular location">
    <subcellularLocation>
        <location evidence="1">Cytoplasm</location>
    </subcellularLocation>
</comment>
<comment type="similarity">
    <text evidence="1">Belongs to the RbfA family.</text>
</comment>
<organism>
    <name type="scientific">Treponema denticola (strain ATCC 35405 / DSM 14222 / CIP 103919 / JCM 8153 / KCTC 15104)</name>
    <dbReference type="NCBI Taxonomy" id="243275"/>
    <lineage>
        <taxon>Bacteria</taxon>
        <taxon>Pseudomonadati</taxon>
        <taxon>Spirochaetota</taxon>
        <taxon>Spirochaetia</taxon>
        <taxon>Spirochaetales</taxon>
        <taxon>Treponemataceae</taxon>
        <taxon>Treponema</taxon>
    </lineage>
</organism>
<dbReference type="EMBL" id="AE017226">
    <property type="protein sequence ID" value="AAS11594.1"/>
    <property type="molecule type" value="Genomic_DNA"/>
</dbReference>
<dbReference type="RefSeq" id="NP_971713.1">
    <property type="nucleotide sequence ID" value="NC_002967.9"/>
</dbReference>
<dbReference type="RefSeq" id="WP_002670660.1">
    <property type="nucleotide sequence ID" value="NC_002967.9"/>
</dbReference>
<dbReference type="SMR" id="Q73NP7"/>
<dbReference type="STRING" id="243275.TDE_1105"/>
<dbReference type="PaxDb" id="243275-TDE_1105"/>
<dbReference type="GeneID" id="2740235"/>
<dbReference type="KEGG" id="tde:TDE_1105"/>
<dbReference type="PATRIC" id="fig|243275.7.peg.1064"/>
<dbReference type="eggNOG" id="COG0858">
    <property type="taxonomic scope" value="Bacteria"/>
</dbReference>
<dbReference type="HOGENOM" id="CLU_089475_6_5_12"/>
<dbReference type="OrthoDB" id="370444at2"/>
<dbReference type="Proteomes" id="UP000008212">
    <property type="component" value="Chromosome"/>
</dbReference>
<dbReference type="GO" id="GO:0005829">
    <property type="term" value="C:cytosol"/>
    <property type="evidence" value="ECO:0007669"/>
    <property type="project" value="TreeGrafter"/>
</dbReference>
<dbReference type="GO" id="GO:0043024">
    <property type="term" value="F:ribosomal small subunit binding"/>
    <property type="evidence" value="ECO:0007669"/>
    <property type="project" value="TreeGrafter"/>
</dbReference>
<dbReference type="GO" id="GO:0030490">
    <property type="term" value="P:maturation of SSU-rRNA"/>
    <property type="evidence" value="ECO:0007669"/>
    <property type="project" value="UniProtKB-UniRule"/>
</dbReference>
<dbReference type="Gene3D" id="3.30.300.20">
    <property type="match status" value="1"/>
</dbReference>
<dbReference type="HAMAP" id="MF_00003">
    <property type="entry name" value="RbfA"/>
    <property type="match status" value="1"/>
</dbReference>
<dbReference type="InterPro" id="IPR015946">
    <property type="entry name" value="KH_dom-like_a/b"/>
</dbReference>
<dbReference type="InterPro" id="IPR000238">
    <property type="entry name" value="RbfA"/>
</dbReference>
<dbReference type="InterPro" id="IPR023799">
    <property type="entry name" value="RbfA_dom_sf"/>
</dbReference>
<dbReference type="InterPro" id="IPR020053">
    <property type="entry name" value="Ribosome-bd_factorA_CS"/>
</dbReference>
<dbReference type="NCBIfam" id="TIGR00082">
    <property type="entry name" value="rbfA"/>
    <property type="match status" value="1"/>
</dbReference>
<dbReference type="PANTHER" id="PTHR33515">
    <property type="entry name" value="RIBOSOME-BINDING FACTOR A, CHLOROPLASTIC-RELATED"/>
    <property type="match status" value="1"/>
</dbReference>
<dbReference type="PANTHER" id="PTHR33515:SF1">
    <property type="entry name" value="RIBOSOME-BINDING FACTOR A, CHLOROPLASTIC-RELATED"/>
    <property type="match status" value="1"/>
</dbReference>
<dbReference type="Pfam" id="PF02033">
    <property type="entry name" value="RBFA"/>
    <property type="match status" value="1"/>
</dbReference>
<dbReference type="SUPFAM" id="SSF89919">
    <property type="entry name" value="Ribosome-binding factor A, RbfA"/>
    <property type="match status" value="1"/>
</dbReference>
<dbReference type="PROSITE" id="PS01319">
    <property type="entry name" value="RBFA"/>
    <property type="match status" value="1"/>
</dbReference>
<evidence type="ECO:0000255" key="1">
    <source>
        <dbReference type="HAMAP-Rule" id="MF_00003"/>
    </source>
</evidence>
<protein>
    <recommendedName>
        <fullName evidence="1">Ribosome-binding factor A</fullName>
    </recommendedName>
</protein>